<proteinExistence type="inferred from homology"/>
<gene>
    <name evidence="1" type="primary">trpD</name>
    <name type="ordered locus">Ta0804</name>
</gene>
<dbReference type="EC" id="2.4.2.18" evidence="1"/>
<dbReference type="EMBL" id="AL445065">
    <property type="protein sequence ID" value="CAC11933.1"/>
    <property type="molecule type" value="Genomic_DNA"/>
</dbReference>
<dbReference type="RefSeq" id="WP_010901216.1">
    <property type="nucleotide sequence ID" value="NC_002578.1"/>
</dbReference>
<dbReference type="SMR" id="Q9HK06"/>
<dbReference type="FunCoup" id="Q9HK06">
    <property type="interactions" value="86"/>
</dbReference>
<dbReference type="STRING" id="273075.gene:9572018"/>
<dbReference type="PaxDb" id="273075-Ta0804"/>
<dbReference type="EnsemblBacteria" id="CAC11933">
    <property type="protein sequence ID" value="CAC11933"/>
    <property type="gene ID" value="CAC11933"/>
</dbReference>
<dbReference type="KEGG" id="tac:Ta0804"/>
<dbReference type="eggNOG" id="arCOG02012">
    <property type="taxonomic scope" value="Archaea"/>
</dbReference>
<dbReference type="HOGENOM" id="CLU_034315_3_1_2"/>
<dbReference type="InParanoid" id="Q9HK06"/>
<dbReference type="OrthoDB" id="8214at2157"/>
<dbReference type="UniPathway" id="UPA00035">
    <property type="reaction ID" value="UER00041"/>
</dbReference>
<dbReference type="Proteomes" id="UP000001024">
    <property type="component" value="Chromosome"/>
</dbReference>
<dbReference type="GO" id="GO:0005829">
    <property type="term" value="C:cytosol"/>
    <property type="evidence" value="ECO:0007669"/>
    <property type="project" value="TreeGrafter"/>
</dbReference>
<dbReference type="GO" id="GO:0004048">
    <property type="term" value="F:anthranilate phosphoribosyltransferase activity"/>
    <property type="evidence" value="ECO:0007669"/>
    <property type="project" value="UniProtKB-UniRule"/>
</dbReference>
<dbReference type="GO" id="GO:0000287">
    <property type="term" value="F:magnesium ion binding"/>
    <property type="evidence" value="ECO:0007669"/>
    <property type="project" value="UniProtKB-UniRule"/>
</dbReference>
<dbReference type="GO" id="GO:0000162">
    <property type="term" value="P:L-tryptophan biosynthetic process"/>
    <property type="evidence" value="ECO:0007669"/>
    <property type="project" value="UniProtKB-UniRule"/>
</dbReference>
<dbReference type="Gene3D" id="3.40.1030.10">
    <property type="entry name" value="Nucleoside phosphorylase/phosphoribosyltransferase catalytic domain"/>
    <property type="match status" value="1"/>
</dbReference>
<dbReference type="Gene3D" id="1.20.970.10">
    <property type="entry name" value="Transferase, Pyrimidine Nucleoside Phosphorylase, Chain C"/>
    <property type="match status" value="1"/>
</dbReference>
<dbReference type="HAMAP" id="MF_00211">
    <property type="entry name" value="TrpD"/>
    <property type="match status" value="1"/>
</dbReference>
<dbReference type="InterPro" id="IPR005940">
    <property type="entry name" value="Anthranilate_Pribosyl_Tfrase"/>
</dbReference>
<dbReference type="InterPro" id="IPR000312">
    <property type="entry name" value="Glycosyl_Trfase_fam3"/>
</dbReference>
<dbReference type="InterPro" id="IPR017459">
    <property type="entry name" value="Glycosyl_Trfase_fam3_N_dom"/>
</dbReference>
<dbReference type="InterPro" id="IPR036320">
    <property type="entry name" value="Glycosyl_Trfase_fam3_N_dom_sf"/>
</dbReference>
<dbReference type="InterPro" id="IPR035902">
    <property type="entry name" value="Nuc_phospho_transferase"/>
</dbReference>
<dbReference type="NCBIfam" id="TIGR01245">
    <property type="entry name" value="trpD"/>
    <property type="match status" value="1"/>
</dbReference>
<dbReference type="PANTHER" id="PTHR43285">
    <property type="entry name" value="ANTHRANILATE PHOSPHORIBOSYLTRANSFERASE"/>
    <property type="match status" value="1"/>
</dbReference>
<dbReference type="PANTHER" id="PTHR43285:SF2">
    <property type="entry name" value="ANTHRANILATE PHOSPHORIBOSYLTRANSFERASE"/>
    <property type="match status" value="1"/>
</dbReference>
<dbReference type="Pfam" id="PF02885">
    <property type="entry name" value="Glycos_trans_3N"/>
    <property type="match status" value="1"/>
</dbReference>
<dbReference type="Pfam" id="PF00591">
    <property type="entry name" value="Glycos_transf_3"/>
    <property type="match status" value="1"/>
</dbReference>
<dbReference type="SUPFAM" id="SSF52418">
    <property type="entry name" value="Nucleoside phosphorylase/phosphoribosyltransferase catalytic domain"/>
    <property type="match status" value="1"/>
</dbReference>
<dbReference type="SUPFAM" id="SSF47648">
    <property type="entry name" value="Nucleoside phosphorylase/phosphoribosyltransferase N-terminal domain"/>
    <property type="match status" value="1"/>
</dbReference>
<comment type="function">
    <text evidence="1">Catalyzes the transfer of the phosphoribosyl group of 5-phosphorylribose-1-pyrophosphate (PRPP) to anthranilate to yield N-(5'-phosphoribosyl)-anthranilate (PRA).</text>
</comment>
<comment type="catalytic activity">
    <reaction evidence="1">
        <text>N-(5-phospho-beta-D-ribosyl)anthranilate + diphosphate = 5-phospho-alpha-D-ribose 1-diphosphate + anthranilate</text>
        <dbReference type="Rhea" id="RHEA:11768"/>
        <dbReference type="ChEBI" id="CHEBI:16567"/>
        <dbReference type="ChEBI" id="CHEBI:18277"/>
        <dbReference type="ChEBI" id="CHEBI:33019"/>
        <dbReference type="ChEBI" id="CHEBI:58017"/>
        <dbReference type="EC" id="2.4.2.18"/>
    </reaction>
</comment>
<comment type="cofactor">
    <cofactor evidence="1">
        <name>Mg(2+)</name>
        <dbReference type="ChEBI" id="CHEBI:18420"/>
    </cofactor>
    <text evidence="1">Binds 2 magnesium ions per monomer.</text>
</comment>
<comment type="pathway">
    <text evidence="1">Amino-acid biosynthesis; L-tryptophan biosynthesis; L-tryptophan from chorismate: step 2/5.</text>
</comment>
<comment type="subunit">
    <text evidence="1">Homodimer.</text>
</comment>
<comment type="similarity">
    <text evidence="1">Belongs to the anthranilate phosphoribosyltransferase family.</text>
</comment>
<protein>
    <recommendedName>
        <fullName evidence="1">Anthranilate phosphoribosyltransferase</fullName>
        <ecNumber evidence="1">2.4.2.18</ecNumber>
    </recommendedName>
</protein>
<feature type="chain" id="PRO_0000154525" description="Anthranilate phosphoribosyltransferase">
    <location>
        <begin position="1"/>
        <end position="322"/>
    </location>
</feature>
<feature type="binding site" evidence="1">
    <location>
        <position position="71"/>
    </location>
    <ligand>
        <name>5-phospho-alpha-D-ribose 1-diphosphate</name>
        <dbReference type="ChEBI" id="CHEBI:58017"/>
    </ligand>
</feature>
<feature type="binding site" evidence="1">
    <location>
        <position position="71"/>
    </location>
    <ligand>
        <name>anthranilate</name>
        <dbReference type="ChEBI" id="CHEBI:16567"/>
        <label>1</label>
    </ligand>
</feature>
<feature type="binding site" evidence="1">
    <location>
        <begin position="74"/>
        <end position="75"/>
    </location>
    <ligand>
        <name>5-phospho-alpha-D-ribose 1-diphosphate</name>
        <dbReference type="ChEBI" id="CHEBI:58017"/>
    </ligand>
</feature>
<feature type="binding site" evidence="1">
    <location>
        <position position="79"/>
    </location>
    <ligand>
        <name>5-phospho-alpha-D-ribose 1-diphosphate</name>
        <dbReference type="ChEBI" id="CHEBI:58017"/>
    </ligand>
</feature>
<feature type="binding site" evidence="1">
    <location>
        <begin position="81"/>
        <end position="84"/>
    </location>
    <ligand>
        <name>5-phospho-alpha-D-ribose 1-diphosphate</name>
        <dbReference type="ChEBI" id="CHEBI:58017"/>
    </ligand>
</feature>
<feature type="binding site" evidence="1">
    <location>
        <position position="83"/>
    </location>
    <ligand>
        <name>Mg(2+)</name>
        <dbReference type="ChEBI" id="CHEBI:18420"/>
        <label>1</label>
    </ligand>
</feature>
<feature type="binding site" evidence="1">
    <location>
        <begin position="99"/>
        <end position="107"/>
    </location>
    <ligand>
        <name>5-phospho-alpha-D-ribose 1-diphosphate</name>
        <dbReference type="ChEBI" id="CHEBI:58017"/>
    </ligand>
</feature>
<feature type="binding site" evidence="1">
    <location>
        <position position="102"/>
    </location>
    <ligand>
        <name>anthranilate</name>
        <dbReference type="ChEBI" id="CHEBI:16567"/>
        <label>1</label>
    </ligand>
</feature>
<feature type="binding site" evidence="1">
    <location>
        <position position="111"/>
    </location>
    <ligand>
        <name>5-phospho-alpha-D-ribose 1-diphosphate</name>
        <dbReference type="ChEBI" id="CHEBI:58017"/>
    </ligand>
</feature>
<feature type="binding site" evidence="1">
    <location>
        <position position="157"/>
    </location>
    <ligand>
        <name>anthranilate</name>
        <dbReference type="ChEBI" id="CHEBI:16567"/>
        <label>2</label>
    </ligand>
</feature>
<feature type="binding site" evidence="1">
    <location>
        <position position="215"/>
    </location>
    <ligand>
        <name>Mg(2+)</name>
        <dbReference type="ChEBI" id="CHEBI:18420"/>
        <label>2</label>
    </ligand>
</feature>
<feature type="binding site" evidence="1">
    <location>
        <position position="216"/>
    </location>
    <ligand>
        <name>Mg(2+)</name>
        <dbReference type="ChEBI" id="CHEBI:18420"/>
        <label>1</label>
    </ligand>
</feature>
<feature type="binding site" evidence="1">
    <location>
        <position position="216"/>
    </location>
    <ligand>
        <name>Mg(2+)</name>
        <dbReference type="ChEBI" id="CHEBI:18420"/>
        <label>2</label>
    </ligand>
</feature>
<keyword id="KW-0028">Amino-acid biosynthesis</keyword>
<keyword id="KW-0057">Aromatic amino acid biosynthesis</keyword>
<keyword id="KW-0328">Glycosyltransferase</keyword>
<keyword id="KW-0460">Magnesium</keyword>
<keyword id="KW-0479">Metal-binding</keyword>
<keyword id="KW-1185">Reference proteome</keyword>
<keyword id="KW-0808">Transferase</keyword>
<keyword id="KW-0822">Tryptophan biosynthesis</keyword>
<evidence type="ECO:0000255" key="1">
    <source>
        <dbReference type="HAMAP-Rule" id="MF_00211"/>
    </source>
</evidence>
<sequence length="322" mass="34442">MYESFLTGKPMDRATAMDLMQYMASPECSDAFRAAVLSVLRVRGVTEDEMMGFYEAMHAPNDVTDATDIVGTGGDMAHTINVSTASAIVAASMGLKIAKFGNRSASGNHGAADFMSETGYAFPKSTGEALRRLSRTNFVFLYAPDFLKEFALFAGVRKMLGFPTVLNFLGPILNPLSPIRRVIGTSDPSFMELYAGIARRSGMRAIILHSADGMDEISPFAKARIMHVSDLVSESYVDASSLTGPLERRNIASADPGAISGLTLSAIRGENEDGARFVALNTAPVLIINGLASDFQEGYEAALEHIMSGGPAEFLKVIAGDR</sequence>
<organism>
    <name type="scientific">Thermoplasma acidophilum (strain ATCC 25905 / DSM 1728 / JCM 9062 / NBRC 15155 / AMRC-C165)</name>
    <dbReference type="NCBI Taxonomy" id="273075"/>
    <lineage>
        <taxon>Archaea</taxon>
        <taxon>Methanobacteriati</taxon>
        <taxon>Thermoplasmatota</taxon>
        <taxon>Thermoplasmata</taxon>
        <taxon>Thermoplasmatales</taxon>
        <taxon>Thermoplasmataceae</taxon>
        <taxon>Thermoplasma</taxon>
    </lineage>
</organism>
<reference key="1">
    <citation type="journal article" date="2000" name="Nature">
        <title>The genome sequence of the thermoacidophilic scavenger Thermoplasma acidophilum.</title>
        <authorList>
            <person name="Ruepp A."/>
            <person name="Graml W."/>
            <person name="Santos-Martinez M.-L."/>
            <person name="Koretke K.K."/>
            <person name="Volker C."/>
            <person name="Mewes H.-W."/>
            <person name="Frishman D."/>
            <person name="Stocker S."/>
            <person name="Lupas A.N."/>
            <person name="Baumeister W."/>
        </authorList>
    </citation>
    <scope>NUCLEOTIDE SEQUENCE [LARGE SCALE GENOMIC DNA]</scope>
    <source>
        <strain>ATCC 25905 / DSM 1728 / JCM 9062 / NBRC 15155 / AMRC-C165</strain>
    </source>
</reference>
<name>TRPD_THEAC</name>
<accession>Q9HK06</accession>